<comment type="function">
    <text evidence="2">Component of heterochromatin that maintains heterochromatin integrity during G1/S progression and regulates the duration of G1 phase to critically influence cell proliferative capacity. May play a role in hypoxia-induced oncogenesis.</text>
</comment>
<comment type="subunit">
    <text evidence="2">Interacts (via PxVxL motif) with CBX5.</text>
</comment>
<comment type="subcellular location">
    <subcellularLocation>
        <location evidence="2">Nucleus</location>
    </subcellularLocation>
    <subcellularLocation>
        <location evidence="2">Chromosome</location>
    </subcellularLocation>
    <text evidence="2">localized in nuclei but not in nucleoli in interphase. Colocalized with chromosomes in mitosis, with a gradually increased during G1 progression and a maximum level during late G1 phase (G1/S).</text>
</comment>
<comment type="domain">
    <text evidence="2">A central region that included the first H15 (linker histone H1/H5 globular) domain binds at the entry/exit site of the nucleosomal DNA.</text>
</comment>
<dbReference type="EMBL" id="BC123556">
    <property type="protein sequence ID" value="AAI23557.1"/>
    <property type="molecule type" value="mRNA"/>
</dbReference>
<dbReference type="RefSeq" id="NP_001068904.1">
    <property type="nucleotide sequence ID" value="NM_001075436.1"/>
</dbReference>
<dbReference type="RefSeq" id="XP_005203156.1">
    <property type="nucleotide sequence ID" value="XM_005203099.3"/>
</dbReference>
<dbReference type="RefSeq" id="XP_005203157.1">
    <property type="nucleotide sequence ID" value="XM_005203100.4"/>
</dbReference>
<dbReference type="RefSeq" id="XP_024856334.1">
    <property type="nucleotide sequence ID" value="XM_025000566.2"/>
</dbReference>
<dbReference type="RefSeq" id="XP_059748879.1">
    <property type="nucleotide sequence ID" value="XM_059892896.1"/>
</dbReference>
<dbReference type="RefSeq" id="XP_059748881.1">
    <property type="nucleotide sequence ID" value="XM_059892898.1"/>
</dbReference>
<dbReference type="RefSeq" id="XP_059748882.1">
    <property type="nucleotide sequence ID" value="XM_059892899.1"/>
</dbReference>
<dbReference type="SMR" id="Q08DU9"/>
<dbReference type="FunCoup" id="Q08DU9">
    <property type="interactions" value="2850"/>
</dbReference>
<dbReference type="STRING" id="9913.ENSBTAP00000068482"/>
<dbReference type="PaxDb" id="9913-ENSBTAP00000024825"/>
<dbReference type="PeptideAtlas" id="Q08DU9"/>
<dbReference type="Ensembl" id="ENSBTAT00000024825.5">
    <property type="protein sequence ID" value="ENSBTAP00000024825.4"/>
    <property type="gene ID" value="ENSBTAG00000018656.6"/>
</dbReference>
<dbReference type="GeneID" id="510194"/>
<dbReference type="KEGG" id="bta:510194"/>
<dbReference type="CTD" id="50809"/>
<dbReference type="VEuPathDB" id="HostDB:ENSBTAG00000018656"/>
<dbReference type="VGNC" id="VGNC:29935">
    <property type="gene designation" value="HP1BP3"/>
</dbReference>
<dbReference type="eggNOG" id="KOG4012">
    <property type="taxonomic scope" value="Eukaryota"/>
</dbReference>
<dbReference type="GeneTree" id="ENSGT00940000155314"/>
<dbReference type="HOGENOM" id="CLU_035727_1_0_1"/>
<dbReference type="InParanoid" id="Q08DU9"/>
<dbReference type="OMA" id="IQNCKER"/>
<dbReference type="OrthoDB" id="7684689at2759"/>
<dbReference type="TreeFam" id="TF106395"/>
<dbReference type="CD-CODE" id="D7FE2080">
    <property type="entry name" value="Nucleolus"/>
</dbReference>
<dbReference type="Proteomes" id="UP000009136">
    <property type="component" value="Chromosome 2"/>
</dbReference>
<dbReference type="Bgee" id="ENSBTAG00000018656">
    <property type="expression patterns" value="Expressed in thymus and 106 other cell types or tissues"/>
</dbReference>
<dbReference type="GO" id="GO:0005694">
    <property type="term" value="C:chromosome"/>
    <property type="evidence" value="ECO:0000250"/>
    <property type="project" value="UniProtKB"/>
</dbReference>
<dbReference type="GO" id="GO:0016607">
    <property type="term" value="C:nuclear speck"/>
    <property type="evidence" value="ECO:0007669"/>
    <property type="project" value="Ensembl"/>
</dbReference>
<dbReference type="GO" id="GO:0000786">
    <property type="term" value="C:nucleosome"/>
    <property type="evidence" value="ECO:0007669"/>
    <property type="project" value="InterPro"/>
</dbReference>
<dbReference type="GO" id="GO:0005634">
    <property type="term" value="C:nucleus"/>
    <property type="evidence" value="ECO:0000250"/>
    <property type="project" value="UniProtKB"/>
</dbReference>
<dbReference type="GO" id="GO:0003677">
    <property type="term" value="F:DNA binding"/>
    <property type="evidence" value="ECO:0000250"/>
    <property type="project" value="UniProtKB"/>
</dbReference>
<dbReference type="GO" id="GO:0031491">
    <property type="term" value="F:nucleosome binding"/>
    <property type="evidence" value="ECO:0000250"/>
    <property type="project" value="UniProtKB"/>
</dbReference>
<dbReference type="GO" id="GO:0071456">
    <property type="term" value="P:cellular response to hypoxia"/>
    <property type="evidence" value="ECO:0000250"/>
    <property type="project" value="UniProtKB"/>
</dbReference>
<dbReference type="GO" id="GO:0070828">
    <property type="term" value="P:heterochromatin organization"/>
    <property type="evidence" value="ECO:0000250"/>
    <property type="project" value="UniProtKB"/>
</dbReference>
<dbReference type="GO" id="GO:0006334">
    <property type="term" value="P:nucleosome assembly"/>
    <property type="evidence" value="ECO:0007669"/>
    <property type="project" value="InterPro"/>
</dbReference>
<dbReference type="GO" id="GO:0042127">
    <property type="term" value="P:regulation of cell population proliferation"/>
    <property type="evidence" value="ECO:0000250"/>
    <property type="project" value="UniProtKB"/>
</dbReference>
<dbReference type="GO" id="GO:0006355">
    <property type="term" value="P:regulation of DNA-templated transcription"/>
    <property type="evidence" value="ECO:0000250"/>
    <property type="project" value="UniProtKB"/>
</dbReference>
<dbReference type="GO" id="GO:0097298">
    <property type="term" value="P:regulation of nucleus size"/>
    <property type="evidence" value="ECO:0000250"/>
    <property type="project" value="UniProtKB"/>
</dbReference>
<dbReference type="CDD" id="cd00073">
    <property type="entry name" value="H15"/>
    <property type="match status" value="1"/>
</dbReference>
<dbReference type="FunFam" id="1.10.10.10:FF:000228">
    <property type="entry name" value="heterochromatin protein 1-binding protein 3 isoform X1"/>
    <property type="match status" value="1"/>
</dbReference>
<dbReference type="FunFam" id="1.10.10.10:FF:000239">
    <property type="entry name" value="heterochromatin protein 1-binding protein 3 isoform X1"/>
    <property type="match status" value="1"/>
</dbReference>
<dbReference type="FunFam" id="1.10.10.10:FF:000276">
    <property type="entry name" value="heterochromatin protein 1-binding protein 3 isoform X1"/>
    <property type="match status" value="1"/>
</dbReference>
<dbReference type="Gene3D" id="1.10.10.10">
    <property type="entry name" value="Winged helix-like DNA-binding domain superfamily/Winged helix DNA-binding domain"/>
    <property type="match status" value="3"/>
</dbReference>
<dbReference type="InterPro" id="IPR005818">
    <property type="entry name" value="Histone_H1/H5_H15"/>
</dbReference>
<dbReference type="InterPro" id="IPR036388">
    <property type="entry name" value="WH-like_DNA-bd_sf"/>
</dbReference>
<dbReference type="InterPro" id="IPR036390">
    <property type="entry name" value="WH_DNA-bd_sf"/>
</dbReference>
<dbReference type="PANTHER" id="PTHR15832:SF1">
    <property type="entry name" value="HETEROCHROMATIN PROTEIN 1-BINDING PROTEIN 3"/>
    <property type="match status" value="1"/>
</dbReference>
<dbReference type="PANTHER" id="PTHR15832">
    <property type="entry name" value="SHC (SRC HOMOLOGY DOMAIN C-TERMINAL) ADAPTOR HOMOLOG"/>
    <property type="match status" value="1"/>
</dbReference>
<dbReference type="Pfam" id="PF00538">
    <property type="entry name" value="Linker_histone"/>
    <property type="match status" value="3"/>
</dbReference>
<dbReference type="SMART" id="SM00526">
    <property type="entry name" value="H15"/>
    <property type="match status" value="3"/>
</dbReference>
<dbReference type="SUPFAM" id="SSF46785">
    <property type="entry name" value="Winged helix' DNA-binding domain"/>
    <property type="match status" value="3"/>
</dbReference>
<dbReference type="PROSITE" id="PS51504">
    <property type="entry name" value="H15"/>
    <property type="match status" value="3"/>
</dbReference>
<proteinExistence type="evidence at transcript level"/>
<accession>Q08DU9</accession>
<protein>
    <recommendedName>
        <fullName>Heterochromatin protein 1-binding protein 3</fullName>
    </recommendedName>
</protein>
<reference key="1">
    <citation type="submission" date="2006-09" db="EMBL/GenBank/DDBJ databases">
        <authorList>
            <consortium name="NIH - Mammalian Gene Collection (MGC) project"/>
        </authorList>
    </citation>
    <scope>NUCLEOTIDE SEQUENCE [LARGE SCALE MRNA]</scope>
    <source>
        <strain>Hereford</strain>
        <tissue>Thymus</tissue>
    </source>
</reference>
<organism>
    <name type="scientific">Bos taurus</name>
    <name type="common">Bovine</name>
    <dbReference type="NCBI Taxonomy" id="9913"/>
    <lineage>
        <taxon>Eukaryota</taxon>
        <taxon>Metazoa</taxon>
        <taxon>Chordata</taxon>
        <taxon>Craniata</taxon>
        <taxon>Vertebrata</taxon>
        <taxon>Euteleostomi</taxon>
        <taxon>Mammalia</taxon>
        <taxon>Eutheria</taxon>
        <taxon>Laurasiatheria</taxon>
        <taxon>Artiodactyla</taxon>
        <taxon>Ruminantia</taxon>
        <taxon>Pecora</taxon>
        <taxon>Bovidae</taxon>
        <taxon>Bovinae</taxon>
        <taxon>Bos</taxon>
    </lineage>
</organism>
<evidence type="ECO:0000250" key="1">
    <source>
        <dbReference type="UniProtKB" id="Q3TEA8"/>
    </source>
</evidence>
<evidence type="ECO:0000250" key="2">
    <source>
        <dbReference type="UniProtKB" id="Q5SSJ5"/>
    </source>
</evidence>
<evidence type="ECO:0000250" key="3">
    <source>
        <dbReference type="UniProtKB" id="Q6P747"/>
    </source>
</evidence>
<evidence type="ECO:0000255" key="4">
    <source>
        <dbReference type="PROSITE-ProRule" id="PRU00837"/>
    </source>
</evidence>
<evidence type="ECO:0000256" key="5">
    <source>
        <dbReference type="SAM" id="MobiDB-lite"/>
    </source>
</evidence>
<gene>
    <name type="primary">HP1BP3</name>
</gene>
<sequence length="555" mass="61477">MATDTSQGELVHPKALPLIVGAQLIHADKLGEKVEDNTMPIRRAVNSTRETPPKSKLAEGVEEKPEPDVSSEESISTVEEQENETPPATSSETEQPKGQPENEEKEENKPSEETKKDEKDQSKEKEKKVKKTIPSWATLSASQLARAQKQTPMASSPRPKMDAILTEAIKACFQKSGASVVAIRKYIIHKYPSLELERRGYLLKQALKRELNRGVIKQVKGKGASGSFVVVQKSRKPPQKSRNRKNRSSAVDPEPQVKLEDILPLAFTRLCEPKEASYSLIRKYVSQYYPKLRVDIRPQLLKNALQRAVERGQLEQITGKGASGTFQLKKSGEKPLLGGSLMEYAILSAIAAMNEPKTCSTTALKKYVLENHPGTNSNYQMHLLKKTLQRCEKNGWMEQISGKGFSGTFQLCFPYYPSPGVLFPKKEPDDSKDEDEDEDEDDSSEEDSEDEEPPPKRRLQKKTPVKSPGKAAAMKQRGSKLAPKVPAAQRGKTRPLPKKAPPKAKSPAKKARPSPSVIKKPSGSSSKKPAASVRKEVKLPGKGKSTMKKSFKAKK</sequence>
<feature type="initiator methionine" description="Removed" evidence="2">
    <location>
        <position position="1"/>
    </location>
</feature>
<feature type="chain" id="PRO_0000339641" description="Heterochromatin protein 1-binding protein 3">
    <location>
        <begin position="2"/>
        <end position="555"/>
    </location>
</feature>
<feature type="domain" description="H15 1" evidence="4">
    <location>
        <begin position="157"/>
        <end position="232"/>
    </location>
</feature>
<feature type="domain" description="H15 2" evidence="4">
    <location>
        <begin position="255"/>
        <end position="330"/>
    </location>
</feature>
<feature type="domain" description="H15 3" evidence="4">
    <location>
        <begin position="337"/>
        <end position="413"/>
    </location>
</feature>
<feature type="region of interest" description="Disordered" evidence="5">
    <location>
        <begin position="29"/>
        <end position="134"/>
    </location>
</feature>
<feature type="region of interest" description="Disordered" evidence="5">
    <location>
        <begin position="227"/>
        <end position="254"/>
    </location>
</feature>
<feature type="region of interest" description="Disordered" evidence="5">
    <location>
        <begin position="422"/>
        <end position="555"/>
    </location>
</feature>
<feature type="compositionally biased region" description="Basic and acidic residues" evidence="5">
    <location>
        <begin position="51"/>
        <end position="67"/>
    </location>
</feature>
<feature type="compositionally biased region" description="Basic and acidic residues" evidence="5">
    <location>
        <begin position="100"/>
        <end position="127"/>
    </location>
</feature>
<feature type="compositionally biased region" description="Basic residues" evidence="5">
    <location>
        <begin position="233"/>
        <end position="247"/>
    </location>
</feature>
<feature type="compositionally biased region" description="Acidic residues" evidence="5">
    <location>
        <begin position="430"/>
        <end position="452"/>
    </location>
</feature>
<feature type="compositionally biased region" description="Basic residues" evidence="5">
    <location>
        <begin position="491"/>
        <end position="512"/>
    </location>
</feature>
<feature type="compositionally biased region" description="Low complexity" evidence="5">
    <location>
        <begin position="513"/>
        <end position="532"/>
    </location>
</feature>
<feature type="compositionally biased region" description="Basic residues" evidence="5">
    <location>
        <begin position="545"/>
        <end position="555"/>
    </location>
</feature>
<feature type="modified residue" description="N-acetylalanine" evidence="2">
    <location>
        <position position="2"/>
    </location>
</feature>
<feature type="modified residue" description="Phosphoserine" evidence="2">
    <location>
        <position position="6"/>
    </location>
</feature>
<feature type="modified residue" description="Phosphothreonine" evidence="2">
    <location>
        <position position="51"/>
    </location>
</feature>
<feature type="modified residue" description="Phosphothreonine" evidence="3">
    <location>
        <position position="85"/>
    </location>
</feature>
<feature type="modified residue" description="Phosphoserine" evidence="2">
    <location>
        <position position="142"/>
    </location>
</feature>
<feature type="modified residue" description="Phosphoserine" evidence="2">
    <location>
        <position position="155"/>
    </location>
</feature>
<feature type="modified residue" description="Phosphoserine" evidence="2">
    <location>
        <position position="156"/>
    </location>
</feature>
<feature type="modified residue" description="N6-acetyllysine" evidence="1">
    <location>
        <position position="190"/>
    </location>
</feature>
<feature type="modified residue" description="Phosphoserine" evidence="2">
    <location>
        <position position="248"/>
    </location>
</feature>
<feature type="modified residue" description="Phosphoserine" evidence="2">
    <location>
        <position position="249"/>
    </location>
</feature>
<feature type="modified residue" description="Phosphoserine" evidence="2">
    <location>
        <position position="443"/>
    </location>
</feature>
<feature type="modified residue" description="Phosphoserine" evidence="2">
    <location>
        <position position="444"/>
    </location>
</feature>
<feature type="modified residue" description="Phosphoserine" evidence="2">
    <location>
        <position position="448"/>
    </location>
</feature>
<feature type="cross-link" description="Glycyl lysine isopeptide (Lys-Gly) (interchain with G-Cter in SUMO2)" evidence="2">
    <location>
        <position position="64"/>
    </location>
</feature>
<feature type="cross-link" description="Glycyl lysine isopeptide (Lys-Gly) (interchain with G-Cter in SUMO2)" evidence="2">
    <location>
        <position position="97"/>
    </location>
</feature>
<feature type="cross-link" description="Glycyl lysine isopeptide (Lys-Gly) (interchain with G-Cter in SUMO2)" evidence="2">
    <location>
        <position position="258"/>
    </location>
</feature>
<name>HP1B3_BOVIN</name>
<keyword id="KW-0007">Acetylation</keyword>
<keyword id="KW-0158">Chromosome</keyword>
<keyword id="KW-0238">DNA-binding</keyword>
<keyword id="KW-1017">Isopeptide bond</keyword>
<keyword id="KW-0539">Nucleus</keyword>
<keyword id="KW-0597">Phosphoprotein</keyword>
<keyword id="KW-1185">Reference proteome</keyword>
<keyword id="KW-0677">Repeat</keyword>
<keyword id="KW-0832">Ubl conjugation</keyword>